<feature type="signal peptide" evidence="1">
    <location>
        <begin position="1"/>
        <end position="28"/>
    </location>
</feature>
<feature type="propeptide" id="PRO_0000017487" evidence="1">
    <location>
        <begin position="29"/>
        <end position="38"/>
    </location>
</feature>
<feature type="chain" id="PRO_0000017488" description="L-selectin">
    <location>
        <begin position="39"/>
        <end position="372"/>
    </location>
</feature>
<feature type="topological domain" description="Extracellular" evidence="3">
    <location>
        <begin position="39"/>
        <end position="332"/>
    </location>
</feature>
<feature type="transmembrane region" description="Helical" evidence="3">
    <location>
        <begin position="333"/>
        <end position="355"/>
    </location>
</feature>
<feature type="topological domain" description="Cytoplasmic" evidence="3">
    <location>
        <begin position="356"/>
        <end position="372"/>
    </location>
</feature>
<feature type="domain" description="C-type lectin" evidence="4">
    <location>
        <begin position="55"/>
        <end position="155"/>
    </location>
</feature>
<feature type="domain" description="EGF-like" evidence="5">
    <location>
        <begin position="156"/>
        <end position="192"/>
    </location>
</feature>
<feature type="domain" description="Sushi 1" evidence="6">
    <location>
        <begin position="195"/>
        <end position="256"/>
    </location>
</feature>
<feature type="domain" description="Sushi 2" evidence="6">
    <location>
        <begin position="257"/>
        <end position="318"/>
    </location>
</feature>
<feature type="binding site" evidence="2">
    <location>
        <position position="118"/>
    </location>
    <ligand>
        <name>Ca(2+)</name>
        <dbReference type="ChEBI" id="CHEBI:29108"/>
    </ligand>
</feature>
<feature type="binding site" evidence="2">
    <location>
        <position position="120"/>
    </location>
    <ligand>
        <name>Ca(2+)</name>
        <dbReference type="ChEBI" id="CHEBI:29108"/>
    </ligand>
</feature>
<feature type="binding site" evidence="2">
    <location>
        <position position="126"/>
    </location>
    <ligand>
        <name>Ca(2+)</name>
        <dbReference type="ChEBI" id="CHEBI:29108"/>
    </ligand>
</feature>
<feature type="binding site" evidence="2">
    <location>
        <position position="143"/>
    </location>
    <ligand>
        <name>Ca(2+)</name>
        <dbReference type="ChEBI" id="CHEBI:29108"/>
    </ligand>
</feature>
<feature type="binding site" evidence="2">
    <location>
        <position position="144"/>
    </location>
    <ligand>
        <name>Ca(2+)</name>
        <dbReference type="ChEBI" id="CHEBI:29108"/>
    </ligand>
</feature>
<feature type="glycosylation site" description="N-linked (GlcNAc...) asparagine" evidence="3">
    <location>
        <position position="60"/>
    </location>
</feature>
<feature type="glycosylation site" description="N-linked (GlcNAc...) asparagine" evidence="3">
    <location>
        <position position="104"/>
    </location>
</feature>
<feature type="glycosylation site" description="N-linked (GlcNAc...) asparagine" evidence="3">
    <location>
        <position position="177"/>
    </location>
</feature>
<feature type="glycosylation site" description="N-linked (GlcNAc...) asparagine" evidence="3">
    <location>
        <position position="226"/>
    </location>
</feature>
<feature type="glycosylation site" description="N-linked (GlcNAc...) asparagine" evidence="3">
    <location>
        <position position="246"/>
    </location>
</feature>
<feature type="glycosylation site" description="N-linked (GlcNAc...) asparagine" evidence="3">
    <location>
        <position position="278"/>
    </location>
</feature>
<feature type="disulfide bond" evidence="2">
    <location>
        <begin position="57"/>
        <end position="155"/>
    </location>
</feature>
<feature type="disulfide bond" evidence="2">
    <location>
        <begin position="128"/>
        <end position="160"/>
    </location>
</feature>
<feature type="disulfide bond" evidence="2">
    <location>
        <begin position="128"/>
        <end position="147"/>
    </location>
</feature>
<feature type="disulfide bond" evidence="2">
    <location>
        <begin position="160"/>
        <end position="171"/>
    </location>
</feature>
<feature type="disulfide bond" evidence="1">
    <location>
        <begin position="165"/>
        <end position="180"/>
    </location>
</feature>
<feature type="disulfide bond" evidence="2">
    <location>
        <begin position="182"/>
        <end position="191"/>
    </location>
</feature>
<feature type="disulfide bond" evidence="1">
    <location>
        <begin position="197"/>
        <end position="241"/>
    </location>
</feature>
<feature type="disulfide bond" evidence="1">
    <location>
        <begin position="227"/>
        <end position="254"/>
    </location>
</feature>
<feature type="disulfide bond" evidence="1">
    <location>
        <begin position="259"/>
        <end position="303"/>
    </location>
</feature>
<feature type="disulfide bond" evidence="1">
    <location>
        <begin position="289"/>
        <end position="316"/>
    </location>
</feature>
<gene>
    <name type="primary">Sell</name>
    <name type="synonym">Lnhr</name>
    <name type="synonym">Ly-22</name>
</gene>
<comment type="function">
    <text evidence="2">Calcium-dependent lectin that mediates cell adhesion by binding to glycoproteins on neighboring cells. Mediates the adherence of lymphocytes to endothelial cells of high endothelial venules in peripheral lymph nodes. Promotes initial tethering and rolling of leukocytes in endothelia.</text>
</comment>
<comment type="subunit">
    <text evidence="2">Interaction with SELPLG/PSGL1 and PODXL2 is required for promoting recruitment and rolling of leukocytes. This interaction is dependent on the sialyl Lewis X glycan modification of SELPLG and PODXL2, and tyrosine sulfation modifications of SELPLG. Sulfation on 'Tyr-51' of SELPLG is important for L-selectin binding.</text>
</comment>
<comment type="subcellular location">
    <subcellularLocation>
        <location evidence="7">Cell membrane</location>
        <topology evidence="9">Single-pass type I membrane protein</topology>
    </subcellularLocation>
</comment>
<comment type="tissue specificity">
    <text evidence="7">Expressed in peripheral blood mononuclear cells (PBMC), spleen and thymus.</text>
</comment>
<comment type="induction">
    <text evidence="7">Down-regulated by mitogen stimulation of PBMC and spleen T-cells.</text>
</comment>
<comment type="PTM">
    <text evidence="2">N-glycosylated.</text>
</comment>
<comment type="similarity">
    <text evidence="9">Belongs to the selectin/LECAM family.</text>
</comment>
<sequence length="372" mass="42441">MVFPWRCQSAQRGSWSFLKLWIRTLLCCDLLPHHGTHCWTYHYSERSMNWENARKFCKHNYTDLVAIQNKREIEYLEKTLPKNPTYYWIGIRKIGKTWTWVGTNKTLTKEAENWGTGEPNNKKSKEDCVEIYIKRERDSGKWNDDACHKRKAALCYTASCQPESCNRHGECVETINNNTCICDPGYYGPQCQYVIQCEPLKAPELGTMNCIHPLGDFSFQSQCAFNCSEGSELLGNAKTECGASGNWTYLEPICQVIQCMPLAAPDLGTMECSHPLANFSFTSACTFTCSEETDLIGERKTVCRSSGSWSSPSPICQKTKRSFSKIKEGDYNPLFIPVAVMVTAFSGLAFIIWLARRLKKGKKSQERMDDPY</sequence>
<reference key="1">
    <citation type="journal article" date="1992" name="Biochim. Biophys. Acta">
        <title>Sequence and expression of a rat cDNA for LECAM-1.</title>
        <authorList>
            <person name="Watanabe T."/>
            <person name="Song Y."/>
            <person name="Hirayama Y."/>
            <person name="Tamatani T."/>
            <person name="Kuida K."/>
            <person name="Miyasaka M."/>
        </authorList>
    </citation>
    <scope>NUCLEOTIDE SEQUENCE [MRNA]</scope>
    <scope>SUBCELLULAR LOCATION</scope>
    <scope>INDUCTION</scope>
    <scope>TISSUE SPECIFICITY</scope>
</reference>
<organism>
    <name type="scientific">Rattus norvegicus</name>
    <name type="common">Rat</name>
    <dbReference type="NCBI Taxonomy" id="10116"/>
    <lineage>
        <taxon>Eukaryota</taxon>
        <taxon>Metazoa</taxon>
        <taxon>Chordata</taxon>
        <taxon>Craniata</taxon>
        <taxon>Vertebrata</taxon>
        <taxon>Euteleostomi</taxon>
        <taxon>Mammalia</taxon>
        <taxon>Eutheria</taxon>
        <taxon>Euarchontoglires</taxon>
        <taxon>Glires</taxon>
        <taxon>Rodentia</taxon>
        <taxon>Myomorpha</taxon>
        <taxon>Muroidea</taxon>
        <taxon>Muridae</taxon>
        <taxon>Murinae</taxon>
        <taxon>Rattus</taxon>
    </lineage>
</organism>
<protein>
    <recommendedName>
        <fullName>L-selectin</fullName>
    </recommendedName>
    <alternativeName>
        <fullName>CD62 antigen-like family member L</fullName>
    </alternativeName>
    <alternativeName>
        <fullName>Leukocyte adhesion molecule 1</fullName>
        <shortName>LAM-1</shortName>
    </alternativeName>
    <alternativeName>
        <fullName>Leukocyte-endothelial cell adhesion molecule 1</fullName>
        <shortName evidence="8">LECAM1</shortName>
    </alternativeName>
    <alternativeName>
        <fullName>Lymph node homing receptor</fullName>
    </alternativeName>
    <alternativeName>
        <fullName>Lymphocyte antigen 22</fullName>
        <shortName>Ly-22</shortName>
    </alternativeName>
    <alternativeName>
        <fullName>Lymphocyte surface MEL-14 antigen</fullName>
    </alternativeName>
    <cdAntigenName>CD62L</cdAntigenName>
</protein>
<keyword id="KW-0106">Calcium</keyword>
<keyword id="KW-0130">Cell adhesion</keyword>
<keyword id="KW-1003">Cell membrane</keyword>
<keyword id="KW-1015">Disulfide bond</keyword>
<keyword id="KW-0245">EGF-like domain</keyword>
<keyword id="KW-0325">Glycoprotein</keyword>
<keyword id="KW-0430">Lectin</keyword>
<keyword id="KW-0472">Membrane</keyword>
<keyword id="KW-0479">Metal-binding</keyword>
<keyword id="KW-1185">Reference proteome</keyword>
<keyword id="KW-0677">Repeat</keyword>
<keyword id="KW-0732">Signal</keyword>
<keyword id="KW-0768">Sushi</keyword>
<keyword id="KW-0812">Transmembrane</keyword>
<keyword id="KW-1133">Transmembrane helix</keyword>
<dbReference type="EMBL" id="D10831">
    <property type="protein sequence ID" value="BAA01613.1"/>
    <property type="molecule type" value="mRNA"/>
</dbReference>
<dbReference type="PIR" id="S23936">
    <property type="entry name" value="S23936"/>
</dbReference>
<dbReference type="BMRB" id="P30836"/>
<dbReference type="SMR" id="P30836"/>
<dbReference type="FunCoup" id="P30836">
    <property type="interactions" value="139"/>
</dbReference>
<dbReference type="STRING" id="10116.ENSRNOP00000003733"/>
<dbReference type="GlyCosmos" id="P30836">
    <property type="glycosylation" value="6 sites, No reported glycans"/>
</dbReference>
<dbReference type="GlyGen" id="P30836">
    <property type="glycosylation" value="6 sites"/>
</dbReference>
<dbReference type="PhosphoSitePlus" id="P30836"/>
<dbReference type="SwissPalm" id="P30836"/>
<dbReference type="PaxDb" id="10116-ENSRNOP00000003733"/>
<dbReference type="UCSC" id="RGD:3655">
    <property type="organism name" value="rat"/>
</dbReference>
<dbReference type="AGR" id="RGD:3655"/>
<dbReference type="RGD" id="3655">
    <property type="gene designation" value="Sell"/>
</dbReference>
<dbReference type="eggNOG" id="KOG4297">
    <property type="taxonomic scope" value="Eukaryota"/>
</dbReference>
<dbReference type="InParanoid" id="P30836"/>
<dbReference type="PhylomeDB" id="P30836"/>
<dbReference type="Reactome" id="R-RNO-198933">
    <property type="pathway name" value="Immunoregulatory interactions between a Lymphoid and a non-Lymphoid cell"/>
</dbReference>
<dbReference type="Reactome" id="R-RNO-202733">
    <property type="pathway name" value="Cell surface interactions at the vascular wall"/>
</dbReference>
<dbReference type="Reactome" id="R-RNO-6798695">
    <property type="pathway name" value="Neutrophil degranulation"/>
</dbReference>
<dbReference type="PRO" id="PR:P30836"/>
<dbReference type="Proteomes" id="UP000002494">
    <property type="component" value="Unplaced"/>
</dbReference>
<dbReference type="GO" id="GO:0009986">
    <property type="term" value="C:cell surface"/>
    <property type="evidence" value="ECO:0000314"/>
    <property type="project" value="RGD"/>
</dbReference>
<dbReference type="GO" id="GO:0009897">
    <property type="term" value="C:external side of plasma membrane"/>
    <property type="evidence" value="ECO:0000266"/>
    <property type="project" value="RGD"/>
</dbReference>
<dbReference type="GO" id="GO:0005615">
    <property type="term" value="C:extracellular space"/>
    <property type="evidence" value="ECO:0000314"/>
    <property type="project" value="RGD"/>
</dbReference>
<dbReference type="GO" id="GO:0005886">
    <property type="term" value="C:plasma membrane"/>
    <property type="evidence" value="ECO:0000250"/>
    <property type="project" value="UniProtKB"/>
</dbReference>
<dbReference type="GO" id="GO:0005509">
    <property type="term" value="F:calcium ion binding"/>
    <property type="evidence" value="ECO:0000250"/>
    <property type="project" value="UniProtKB"/>
</dbReference>
<dbReference type="GO" id="GO:0050839">
    <property type="term" value="F:cell adhesion molecule binding"/>
    <property type="evidence" value="ECO:0000266"/>
    <property type="project" value="RGD"/>
</dbReference>
<dbReference type="GO" id="GO:0051861">
    <property type="term" value="F:glycolipid binding"/>
    <property type="evidence" value="ECO:0000314"/>
    <property type="project" value="RGD"/>
</dbReference>
<dbReference type="GO" id="GO:0070492">
    <property type="term" value="F:oligosaccharide binding"/>
    <property type="evidence" value="ECO:0000250"/>
    <property type="project" value="UniProtKB"/>
</dbReference>
<dbReference type="GO" id="GO:0002020">
    <property type="term" value="F:protease binding"/>
    <property type="evidence" value="ECO:0000266"/>
    <property type="project" value="RGD"/>
</dbReference>
<dbReference type="GO" id="GO:0033691">
    <property type="term" value="F:sialic acid binding"/>
    <property type="evidence" value="ECO:0000318"/>
    <property type="project" value="GO_Central"/>
</dbReference>
<dbReference type="GO" id="GO:0016339">
    <property type="term" value="P:calcium-dependent cell-cell adhesion via plasma membrane cell adhesion molecules"/>
    <property type="evidence" value="ECO:0000250"/>
    <property type="project" value="UniProtKB"/>
</dbReference>
<dbReference type="GO" id="GO:0098759">
    <property type="term" value="P:cellular response to interleukin-8"/>
    <property type="evidence" value="ECO:0000270"/>
    <property type="project" value="RGD"/>
</dbReference>
<dbReference type="GO" id="GO:0007157">
    <property type="term" value="P:heterophilic cell-cell adhesion via plasma membrane cell adhesion molecules"/>
    <property type="evidence" value="ECO:0000318"/>
    <property type="project" value="GO_Central"/>
</dbReference>
<dbReference type="GO" id="GO:0034113">
    <property type="term" value="P:heterotypic cell-cell adhesion"/>
    <property type="evidence" value="ECO:0000314"/>
    <property type="project" value="RGD"/>
</dbReference>
<dbReference type="GO" id="GO:0050901">
    <property type="term" value="P:leukocyte tethering or rolling"/>
    <property type="evidence" value="ECO:0000250"/>
    <property type="project" value="UniProtKB"/>
</dbReference>
<dbReference type="GO" id="GO:1903237">
    <property type="term" value="P:negative regulation of leukocyte tethering or rolling"/>
    <property type="evidence" value="ECO:0000315"/>
    <property type="project" value="RGD"/>
</dbReference>
<dbReference type="GO" id="GO:1904999">
    <property type="term" value="P:positive regulation of leukocyte adhesion to arterial endothelial cell"/>
    <property type="evidence" value="ECO:0000315"/>
    <property type="project" value="RGD"/>
</dbReference>
<dbReference type="GO" id="GO:0090023">
    <property type="term" value="P:positive regulation of neutrophil chemotaxis"/>
    <property type="evidence" value="ECO:0000315"/>
    <property type="project" value="RGD"/>
</dbReference>
<dbReference type="GO" id="GO:0070960">
    <property type="term" value="P:positive regulation of neutrophil mediated cytotoxicity"/>
    <property type="evidence" value="ECO:0000315"/>
    <property type="project" value="RGD"/>
</dbReference>
<dbReference type="GO" id="GO:0043117">
    <property type="term" value="P:positive regulation of vascular permeability"/>
    <property type="evidence" value="ECO:0000315"/>
    <property type="project" value="RGD"/>
</dbReference>
<dbReference type="GO" id="GO:0042981">
    <property type="term" value="P:regulation of apoptotic process"/>
    <property type="evidence" value="ECO:0000314"/>
    <property type="project" value="RGD"/>
</dbReference>
<dbReference type="GO" id="GO:0033198">
    <property type="term" value="P:response to ATP"/>
    <property type="evidence" value="ECO:0000266"/>
    <property type="project" value="RGD"/>
</dbReference>
<dbReference type="GO" id="GO:0034097">
    <property type="term" value="P:response to cytokine"/>
    <property type="evidence" value="ECO:0000318"/>
    <property type="project" value="GO_Central"/>
</dbReference>
<dbReference type="GO" id="GO:0045471">
    <property type="term" value="P:response to ethanol"/>
    <property type="evidence" value="ECO:0000270"/>
    <property type="project" value="RGD"/>
</dbReference>
<dbReference type="GO" id="GO:0055093">
    <property type="term" value="P:response to hyperoxia"/>
    <property type="evidence" value="ECO:0000270"/>
    <property type="project" value="RGD"/>
</dbReference>
<dbReference type="GO" id="GO:0070543">
    <property type="term" value="P:response to linoleic acid"/>
    <property type="evidence" value="ECO:0000270"/>
    <property type="project" value="RGD"/>
</dbReference>
<dbReference type="GO" id="GO:0034201">
    <property type="term" value="P:response to oleic acid"/>
    <property type="evidence" value="ECO:0000270"/>
    <property type="project" value="RGD"/>
</dbReference>
<dbReference type="CDD" id="cd00033">
    <property type="entry name" value="CCP"/>
    <property type="match status" value="1"/>
</dbReference>
<dbReference type="CDD" id="cd03592">
    <property type="entry name" value="CLECT_selectins_like"/>
    <property type="match status" value="1"/>
</dbReference>
<dbReference type="CDD" id="cd00054">
    <property type="entry name" value="EGF_CA"/>
    <property type="match status" value="1"/>
</dbReference>
<dbReference type="FunFam" id="3.10.100.10:FF:000007">
    <property type="entry name" value="L-selectin"/>
    <property type="match status" value="1"/>
</dbReference>
<dbReference type="FunFam" id="2.10.25.10:FF:000176">
    <property type="entry name" value="Selectin P"/>
    <property type="match status" value="1"/>
</dbReference>
<dbReference type="FunFam" id="2.10.70.10:FF:000001">
    <property type="entry name" value="Selectin P"/>
    <property type="match status" value="2"/>
</dbReference>
<dbReference type="Gene3D" id="2.10.70.10">
    <property type="entry name" value="Complement Module, domain 1"/>
    <property type="match status" value="2"/>
</dbReference>
<dbReference type="Gene3D" id="3.10.100.10">
    <property type="entry name" value="Mannose-Binding Protein A, subunit A"/>
    <property type="match status" value="1"/>
</dbReference>
<dbReference type="InterPro" id="IPR001304">
    <property type="entry name" value="C-type_lectin-like"/>
</dbReference>
<dbReference type="InterPro" id="IPR016186">
    <property type="entry name" value="C-type_lectin-like/link_sf"/>
</dbReference>
<dbReference type="InterPro" id="IPR018378">
    <property type="entry name" value="C-type_lectin_CS"/>
</dbReference>
<dbReference type="InterPro" id="IPR050350">
    <property type="entry name" value="Compl-Cell_Adhes-Reg"/>
</dbReference>
<dbReference type="InterPro" id="IPR016187">
    <property type="entry name" value="CTDL_fold"/>
</dbReference>
<dbReference type="InterPro" id="IPR000742">
    <property type="entry name" value="EGF-like_dom"/>
</dbReference>
<dbReference type="InterPro" id="IPR013111">
    <property type="entry name" value="EGF_extracell"/>
</dbReference>
<dbReference type="InterPro" id="IPR016348">
    <property type="entry name" value="L-selectin"/>
</dbReference>
<dbReference type="InterPro" id="IPR033991">
    <property type="entry name" value="Selectin_CTLD"/>
</dbReference>
<dbReference type="InterPro" id="IPR002396">
    <property type="entry name" value="Selectin_superfamily"/>
</dbReference>
<dbReference type="InterPro" id="IPR035976">
    <property type="entry name" value="Sushi/SCR/CCP_sf"/>
</dbReference>
<dbReference type="InterPro" id="IPR000436">
    <property type="entry name" value="Sushi_SCR_CCP_dom"/>
</dbReference>
<dbReference type="PANTHER" id="PTHR19325">
    <property type="entry name" value="COMPLEMENT COMPONENT-RELATED SUSHI DOMAIN-CONTAINING"/>
    <property type="match status" value="1"/>
</dbReference>
<dbReference type="PANTHER" id="PTHR19325:SF543">
    <property type="entry name" value="L-SELECTIN"/>
    <property type="match status" value="1"/>
</dbReference>
<dbReference type="Pfam" id="PF07974">
    <property type="entry name" value="EGF_2"/>
    <property type="match status" value="1"/>
</dbReference>
<dbReference type="Pfam" id="PF00059">
    <property type="entry name" value="Lectin_C"/>
    <property type="match status" value="1"/>
</dbReference>
<dbReference type="Pfam" id="PF00084">
    <property type="entry name" value="Sushi"/>
    <property type="match status" value="2"/>
</dbReference>
<dbReference type="PIRSF" id="PIRSF002421">
    <property type="entry name" value="L-selectin"/>
    <property type="match status" value="1"/>
</dbReference>
<dbReference type="PRINTS" id="PR00343">
    <property type="entry name" value="SELECTIN"/>
</dbReference>
<dbReference type="SMART" id="SM00032">
    <property type="entry name" value="CCP"/>
    <property type="match status" value="2"/>
</dbReference>
<dbReference type="SMART" id="SM00034">
    <property type="entry name" value="CLECT"/>
    <property type="match status" value="1"/>
</dbReference>
<dbReference type="SUPFAM" id="SSF56436">
    <property type="entry name" value="C-type lectin-like"/>
    <property type="match status" value="1"/>
</dbReference>
<dbReference type="SUPFAM" id="SSF57535">
    <property type="entry name" value="Complement control module/SCR domain"/>
    <property type="match status" value="2"/>
</dbReference>
<dbReference type="SUPFAM" id="SSF57196">
    <property type="entry name" value="EGF/Laminin"/>
    <property type="match status" value="1"/>
</dbReference>
<dbReference type="PROSITE" id="PS00615">
    <property type="entry name" value="C_TYPE_LECTIN_1"/>
    <property type="match status" value="1"/>
</dbReference>
<dbReference type="PROSITE" id="PS50041">
    <property type="entry name" value="C_TYPE_LECTIN_2"/>
    <property type="match status" value="1"/>
</dbReference>
<dbReference type="PROSITE" id="PS00022">
    <property type="entry name" value="EGF_1"/>
    <property type="match status" value="1"/>
</dbReference>
<dbReference type="PROSITE" id="PS01186">
    <property type="entry name" value="EGF_2"/>
    <property type="match status" value="1"/>
</dbReference>
<dbReference type="PROSITE" id="PS50026">
    <property type="entry name" value="EGF_3"/>
    <property type="match status" value="1"/>
</dbReference>
<dbReference type="PROSITE" id="PS50923">
    <property type="entry name" value="SUSHI"/>
    <property type="match status" value="2"/>
</dbReference>
<evidence type="ECO:0000250" key="1"/>
<evidence type="ECO:0000250" key="2">
    <source>
        <dbReference type="UniProtKB" id="P14151"/>
    </source>
</evidence>
<evidence type="ECO:0000255" key="3"/>
<evidence type="ECO:0000255" key="4">
    <source>
        <dbReference type="PROSITE-ProRule" id="PRU00040"/>
    </source>
</evidence>
<evidence type="ECO:0000255" key="5">
    <source>
        <dbReference type="PROSITE-ProRule" id="PRU00076"/>
    </source>
</evidence>
<evidence type="ECO:0000255" key="6">
    <source>
        <dbReference type="PROSITE-ProRule" id="PRU00302"/>
    </source>
</evidence>
<evidence type="ECO:0000269" key="7">
    <source>
    </source>
</evidence>
<evidence type="ECO:0000303" key="8">
    <source>
    </source>
</evidence>
<evidence type="ECO:0000305" key="9"/>
<proteinExistence type="evidence at transcript level"/>
<name>LYAM1_RAT</name>
<accession>P30836</accession>